<organism>
    <name type="scientific">Cryptococcus neoformans var. neoformans serotype D (strain B-3501A)</name>
    <name type="common">Filobasidiella neoformans</name>
    <dbReference type="NCBI Taxonomy" id="283643"/>
    <lineage>
        <taxon>Eukaryota</taxon>
        <taxon>Fungi</taxon>
        <taxon>Dikarya</taxon>
        <taxon>Basidiomycota</taxon>
        <taxon>Agaricomycotina</taxon>
        <taxon>Tremellomycetes</taxon>
        <taxon>Tremellales</taxon>
        <taxon>Cryptococcaceae</taxon>
        <taxon>Cryptococcus</taxon>
        <taxon>Cryptococcus neoformans species complex</taxon>
    </lineage>
</organism>
<evidence type="ECO:0000250" key="1"/>
<evidence type="ECO:0000255" key="2">
    <source>
        <dbReference type="PROSITE-ProRule" id="PRU00239"/>
    </source>
</evidence>
<evidence type="ECO:0000305" key="3"/>
<accession>P0CQ07</accession>
<accession>Q55IT8</accession>
<accession>Q5KCW3</accession>
<feature type="chain" id="PRO_0000410213" description="Calpain-like protease palB/RIM13">
    <location>
        <begin position="1"/>
        <end position="814"/>
    </location>
</feature>
<feature type="domain" description="Calpain catalytic" evidence="2">
    <location>
        <begin position="118"/>
        <end position="400"/>
    </location>
</feature>
<feature type="active site" evidence="2">
    <location>
        <position position="185"/>
    </location>
</feature>
<feature type="active site" evidence="2">
    <location>
        <position position="354"/>
    </location>
</feature>
<name>PALB_CRYNB</name>
<comment type="function">
    <text evidence="1">Required for the proteolytic cleavage of the transcription factor RIM101 in response to alkaline ambient pH.</text>
</comment>
<comment type="similarity">
    <text evidence="3">Belongs to the peptidase C2 family. PalB/RIM13 subfamily.</text>
</comment>
<gene>
    <name type="primary">RIM13</name>
    <name type="ordered locus">CNBL2460</name>
</gene>
<proteinExistence type="inferred from homology"/>
<keyword id="KW-0378">Hydrolase</keyword>
<keyword id="KW-0645">Protease</keyword>
<keyword id="KW-0788">Thiol protease</keyword>
<protein>
    <recommendedName>
        <fullName>Calpain-like protease palB/RIM13</fullName>
        <ecNumber>3.4.22.-</ecNumber>
    </recommendedName>
    <alternativeName>
        <fullName>Cysteine protease RIM13</fullName>
    </alternativeName>
</protein>
<sequence>MPFCSYQEGLKVASDLGNKAIQTEASLSSLSPVASPIPTLQKAFPIYISAAEAYGHLLSSKLVPQSDIETVKRKWRLVLERAEKVKSRIEQLGGHVAKAEIGDRGEEIAVLRRASLINGVAVELWRPPGDTFDAGEPYREAVQPELAAAQLDMDPEWRDIQADCWLHQAPNEGDWVMRQGPVSDCSVVAAMGVGIKHAGQFGTAFGWENLYPQDAHGRPRRSKNGKHILKLLLNGAWRSVVLDSLLPFSKRDKTPLFTTCHPAPHILPTSVGSPWAPLALKGYFKVHGGYSLRGSNPSSDIYEFMGWIPERIGLKEGFQREKEWKRMKEAWHKGNVMVSLGTGSKVSEGLVKLHAYGVIRLREEGHERILDIFDPGATSFTMSWDQVCAEFEALHLNWKPSVMPNTATRHWSWPKPPDLPSDADPGMMNTRYRLHVNASSPSSSLSEVWILLSQHITSRDRPLDDIALHVFEGLGPNNSRNLGAIYSEGLERTNPYTNSNHLLVRYQLRRPTSDLTLIPSRDRGIDQTGFTLNAFAPASISLSLERISRTLPFTQRISGNLTDRSAGGHPGWPTHMTNPQYKVVVRPGEGKSEISGRIILHGEKDVPWNVKLIWGRGQLVYELSEDLIVADTGSYSYGIAYCDIPELQPDTYTLIVSAFEPGQTGLFSLSLEATAPVSIIPIAAEGAGMYNRVVNGFWTERTAGGRPSGGTYESNPRVEMVLSKPATIQSRLYLPTRSPVPINLTIFKRAQGGALGEQLVTTGPYSDSICGVSTGKMKLDSGVYLLVPSSYEKSKGGWVLKIWSDVALSAEIVG</sequence>
<dbReference type="EC" id="3.4.22.-"/>
<dbReference type="EMBL" id="AAEY01000057">
    <property type="protein sequence ID" value="EAL17732.1"/>
    <property type="molecule type" value="Genomic_DNA"/>
</dbReference>
<dbReference type="RefSeq" id="XP_772379.1">
    <property type="nucleotide sequence ID" value="XM_767286.1"/>
</dbReference>
<dbReference type="SMR" id="P0CQ07"/>
<dbReference type="EnsemblFungi" id="AAW45112">
    <property type="protein sequence ID" value="AAW45112"/>
    <property type="gene ID" value="CNH02440"/>
</dbReference>
<dbReference type="GeneID" id="4939295"/>
<dbReference type="KEGG" id="cnb:CNBL2460"/>
<dbReference type="VEuPathDB" id="FungiDB:CNBL2460"/>
<dbReference type="HOGENOM" id="CLU_006770_0_0_1"/>
<dbReference type="OrthoDB" id="2209at5206"/>
<dbReference type="GO" id="GO:0004198">
    <property type="term" value="F:calcium-dependent cysteine-type endopeptidase activity"/>
    <property type="evidence" value="ECO:0007669"/>
    <property type="project" value="InterPro"/>
</dbReference>
<dbReference type="GO" id="GO:0006508">
    <property type="term" value="P:proteolysis"/>
    <property type="evidence" value="ECO:0007669"/>
    <property type="project" value="UniProtKB-KW"/>
</dbReference>
<dbReference type="Gene3D" id="2.60.120.380">
    <property type="match status" value="2"/>
</dbReference>
<dbReference type="Gene3D" id="3.90.70.10">
    <property type="entry name" value="Cysteine proteinases"/>
    <property type="match status" value="1"/>
</dbReference>
<dbReference type="InterPro" id="IPR022683">
    <property type="entry name" value="Calpain_III"/>
</dbReference>
<dbReference type="InterPro" id="IPR036213">
    <property type="entry name" value="Calpain_III_sf"/>
</dbReference>
<dbReference type="InterPro" id="IPR051297">
    <property type="entry name" value="PalB/RIM13_Calpain-like"/>
</dbReference>
<dbReference type="InterPro" id="IPR038765">
    <property type="entry name" value="Papain-like_cys_pep_sf"/>
</dbReference>
<dbReference type="InterPro" id="IPR001300">
    <property type="entry name" value="Peptidase_C2_calpain_cat"/>
</dbReference>
<dbReference type="PANTHER" id="PTHR46143">
    <property type="entry name" value="CALPAIN-7"/>
    <property type="match status" value="1"/>
</dbReference>
<dbReference type="PANTHER" id="PTHR46143:SF1">
    <property type="entry name" value="CALPAIN-7"/>
    <property type="match status" value="1"/>
</dbReference>
<dbReference type="Pfam" id="PF00648">
    <property type="entry name" value="Peptidase_C2"/>
    <property type="match status" value="1"/>
</dbReference>
<dbReference type="SMART" id="SM00720">
    <property type="entry name" value="calpain_III"/>
    <property type="match status" value="1"/>
</dbReference>
<dbReference type="SMART" id="SM00230">
    <property type="entry name" value="CysPc"/>
    <property type="match status" value="1"/>
</dbReference>
<dbReference type="SUPFAM" id="SSF49758">
    <property type="entry name" value="Calpain large subunit, middle domain (domain III)"/>
    <property type="match status" value="3"/>
</dbReference>
<dbReference type="SUPFAM" id="SSF54001">
    <property type="entry name" value="Cysteine proteinases"/>
    <property type="match status" value="1"/>
</dbReference>
<dbReference type="PROSITE" id="PS50203">
    <property type="entry name" value="CALPAIN_CAT"/>
    <property type="match status" value="1"/>
</dbReference>
<reference key="1">
    <citation type="journal article" date="2005" name="Science">
        <title>The genome of the basidiomycetous yeast and human pathogen Cryptococcus neoformans.</title>
        <authorList>
            <person name="Loftus B.J."/>
            <person name="Fung E."/>
            <person name="Roncaglia P."/>
            <person name="Rowley D."/>
            <person name="Amedeo P."/>
            <person name="Bruno D."/>
            <person name="Vamathevan J."/>
            <person name="Miranda M."/>
            <person name="Anderson I.J."/>
            <person name="Fraser J.A."/>
            <person name="Allen J.E."/>
            <person name="Bosdet I.E."/>
            <person name="Brent M.R."/>
            <person name="Chiu R."/>
            <person name="Doering T.L."/>
            <person name="Donlin M.J."/>
            <person name="D'Souza C.A."/>
            <person name="Fox D.S."/>
            <person name="Grinberg V."/>
            <person name="Fu J."/>
            <person name="Fukushima M."/>
            <person name="Haas B.J."/>
            <person name="Huang J.C."/>
            <person name="Janbon G."/>
            <person name="Jones S.J.M."/>
            <person name="Koo H.L."/>
            <person name="Krzywinski M.I."/>
            <person name="Kwon-Chung K.J."/>
            <person name="Lengeler K.B."/>
            <person name="Maiti R."/>
            <person name="Marra M.A."/>
            <person name="Marra R.E."/>
            <person name="Mathewson C.A."/>
            <person name="Mitchell T.G."/>
            <person name="Pertea M."/>
            <person name="Riggs F.R."/>
            <person name="Salzberg S.L."/>
            <person name="Schein J.E."/>
            <person name="Shvartsbeyn A."/>
            <person name="Shin H."/>
            <person name="Shumway M."/>
            <person name="Specht C.A."/>
            <person name="Suh B.B."/>
            <person name="Tenney A."/>
            <person name="Utterback T.R."/>
            <person name="Wickes B.L."/>
            <person name="Wortman J.R."/>
            <person name="Wye N.H."/>
            <person name="Kronstad J.W."/>
            <person name="Lodge J.K."/>
            <person name="Heitman J."/>
            <person name="Davis R.W."/>
            <person name="Fraser C.M."/>
            <person name="Hyman R.W."/>
        </authorList>
    </citation>
    <scope>NUCLEOTIDE SEQUENCE [LARGE SCALE GENOMIC DNA]</scope>
    <source>
        <strain>B-3501A</strain>
    </source>
</reference>